<comment type="similarity">
    <text evidence="1">Belongs to the D-glutamate cyclase family.</text>
</comment>
<accession>A5EFR6</accession>
<organism>
    <name type="scientific">Bradyrhizobium sp. (strain BTAi1 / ATCC BAA-1182)</name>
    <dbReference type="NCBI Taxonomy" id="288000"/>
    <lineage>
        <taxon>Bacteria</taxon>
        <taxon>Pseudomonadati</taxon>
        <taxon>Pseudomonadota</taxon>
        <taxon>Alphaproteobacteria</taxon>
        <taxon>Hyphomicrobiales</taxon>
        <taxon>Nitrobacteraceae</taxon>
        <taxon>Bradyrhizobium</taxon>
    </lineage>
</organism>
<dbReference type="EC" id="4.2.1.-" evidence="1"/>
<dbReference type="EMBL" id="CP000494">
    <property type="protein sequence ID" value="ABQ35010.1"/>
    <property type="molecule type" value="Genomic_DNA"/>
</dbReference>
<dbReference type="RefSeq" id="WP_012043031.1">
    <property type="nucleotide sequence ID" value="NC_009485.1"/>
</dbReference>
<dbReference type="SMR" id="A5EFR6"/>
<dbReference type="STRING" id="288000.BBta_2883"/>
<dbReference type="KEGG" id="bbt:BBta_2883"/>
<dbReference type="eggNOG" id="COG4336">
    <property type="taxonomic scope" value="Bacteria"/>
</dbReference>
<dbReference type="HOGENOM" id="CLU_059759_0_0_5"/>
<dbReference type="OrthoDB" id="149585at2"/>
<dbReference type="Proteomes" id="UP000000246">
    <property type="component" value="Chromosome"/>
</dbReference>
<dbReference type="GO" id="GO:0016829">
    <property type="term" value="F:lyase activity"/>
    <property type="evidence" value="ECO:0007669"/>
    <property type="project" value="UniProtKB-KW"/>
</dbReference>
<dbReference type="FunFam" id="3.30.2040.10:FF:000001">
    <property type="entry name" value="D-glutamate cyclase, mitochondrial"/>
    <property type="match status" value="1"/>
</dbReference>
<dbReference type="Gene3D" id="3.40.1640.10">
    <property type="entry name" value="PSTPO5379-like"/>
    <property type="match status" value="1"/>
</dbReference>
<dbReference type="Gene3D" id="3.30.2040.10">
    <property type="entry name" value="PSTPO5379-like domain"/>
    <property type="match status" value="1"/>
</dbReference>
<dbReference type="HAMAP" id="MF_01830">
    <property type="entry name" value="Hydro_lyase"/>
    <property type="match status" value="1"/>
</dbReference>
<dbReference type="InterPro" id="IPR009906">
    <property type="entry name" value="D-Glu_cyclase"/>
</dbReference>
<dbReference type="InterPro" id="IPR038021">
    <property type="entry name" value="Putative_hydro-lyase"/>
</dbReference>
<dbReference type="InterPro" id="IPR016938">
    <property type="entry name" value="UPF0317"/>
</dbReference>
<dbReference type="NCBIfam" id="NF003969">
    <property type="entry name" value="PRK05463.1"/>
    <property type="match status" value="1"/>
</dbReference>
<dbReference type="PANTHER" id="PTHR32022">
    <property type="entry name" value="D-GLUTAMATE CYCLASE, MITOCHONDRIAL"/>
    <property type="match status" value="1"/>
</dbReference>
<dbReference type="PANTHER" id="PTHR32022:SF10">
    <property type="entry name" value="D-GLUTAMATE CYCLASE, MITOCHONDRIAL"/>
    <property type="match status" value="1"/>
</dbReference>
<dbReference type="Pfam" id="PF07286">
    <property type="entry name" value="D-Glu_cyclase"/>
    <property type="match status" value="1"/>
</dbReference>
<dbReference type="PIRSF" id="PIRSF029755">
    <property type="entry name" value="UCP029755"/>
    <property type="match status" value="1"/>
</dbReference>
<dbReference type="SUPFAM" id="SSF160920">
    <property type="entry name" value="PSTPO5379-like"/>
    <property type="match status" value="1"/>
</dbReference>
<protein>
    <recommendedName>
        <fullName evidence="1">Putative hydro-lyase BBta_2883</fullName>
        <ecNumber evidence="1">4.2.1.-</ecNumber>
    </recommendedName>
</protein>
<reference key="1">
    <citation type="journal article" date="2007" name="Science">
        <title>Legumes symbioses: absence of nod genes in photosynthetic bradyrhizobia.</title>
        <authorList>
            <person name="Giraud E."/>
            <person name="Moulin L."/>
            <person name="Vallenet D."/>
            <person name="Barbe V."/>
            <person name="Cytryn E."/>
            <person name="Avarre J.-C."/>
            <person name="Jaubert M."/>
            <person name="Simon D."/>
            <person name="Cartieaux F."/>
            <person name="Prin Y."/>
            <person name="Bena G."/>
            <person name="Hannibal L."/>
            <person name="Fardoux J."/>
            <person name="Kojadinovic M."/>
            <person name="Vuillet L."/>
            <person name="Lajus A."/>
            <person name="Cruveiller S."/>
            <person name="Rouy Z."/>
            <person name="Mangenot S."/>
            <person name="Segurens B."/>
            <person name="Dossat C."/>
            <person name="Franck W.L."/>
            <person name="Chang W.-S."/>
            <person name="Saunders E."/>
            <person name="Bruce D."/>
            <person name="Richardson P."/>
            <person name="Normand P."/>
            <person name="Dreyfus B."/>
            <person name="Pignol D."/>
            <person name="Stacey G."/>
            <person name="Emerich D."/>
            <person name="Vermeglio A."/>
            <person name="Medigue C."/>
            <person name="Sadowsky M."/>
        </authorList>
    </citation>
    <scope>NUCLEOTIDE SEQUENCE [LARGE SCALE GENOMIC DNA]</scope>
    <source>
        <strain>BTAi1 / ATCC BAA-1182</strain>
    </source>
</reference>
<keyword id="KW-0456">Lyase</keyword>
<keyword id="KW-1185">Reference proteome</keyword>
<gene>
    <name type="ordered locus">BBta_2883</name>
</gene>
<sequence length="272" mass="29323">MTVSAAVQQQAGEAGLLPSHQARLDYRTGKGWSTAGVANGFVQGNLAIIPEQYAGAFHRFCQLNPKPCPIIGMSDPGNPFIPALGADLDIRTDVPRYRVWRDGEMVEEPTDLLAHWLDDLVTFVLGCSFSFEEALMADGLPIRHIEQGCRVPMYRTNIACTPSGPFAGPMVVSMRPFKPAQAIRAVQITTRFPAVHGAPVHLGHPDQIGIVDINKPDYGDPVPVAADEIPVFWACGVTPQAVISAAKLPFAITHAPGLMLITDLKNKDLAVL</sequence>
<evidence type="ECO:0000255" key="1">
    <source>
        <dbReference type="HAMAP-Rule" id="MF_01830"/>
    </source>
</evidence>
<proteinExistence type="inferred from homology"/>
<feature type="chain" id="PRO_1000070410" description="Putative hydro-lyase BBta_2883">
    <location>
        <begin position="1"/>
        <end position="272"/>
    </location>
</feature>
<name>Y2883_BRASB</name>